<protein>
    <recommendedName>
        <fullName>Voltage-dependent N-type calcium channel subunit alpha-1B</fullName>
    </recommendedName>
    <alternativeName>
        <fullName>Brain calcium channel III</fullName>
        <shortName>BIII</shortName>
    </alternativeName>
    <alternativeName>
        <fullName>Calcium channel, L type, alpha-1 polypeptide isoform 5</fullName>
    </alternativeName>
    <alternativeName>
        <fullName>Voltage-gated calcium channel subunit alpha Cav2.2</fullName>
    </alternativeName>
</protein>
<sequence>MVRFGDELGGRYGGPGGGERARGGGAGGAGGPGPGGLQPGQRVLYKQSIAQRARTMALYNPIPVKQNCFTVNRSLFVFSEDNVVRKYAKRITEWPPFEYMILATIIANCIVLALEQHLPDGDKTPMSERLDDTEPYFIGIFCFEAGIKIIALGFVFHKGSYLRNGWNVMDFVVVLTGILATAGTDFDLRTLRAVRVLRPLKLVSGIPSLQVVLKSIMKAMVPLLQIGLLLFFAILMFAIIGLEFYMGKFHKACFPNSTDAEPVGDFPCGKEAPARLCEGDTECREYWPGPNFGITNFDNILFAILTVFQCITMEGWTDILYNTNDAAGNTWNWLYFIPLIIIGSFFMLNLVLGVLSGEFAKERERVENRRAFLKLRRQQQIERELNGYLEWIFKAEEVMLAEEDRNAEEKSPLDVLKRAATKKSRNDLIHAEEGEDRFADLCAVGSPFARASLKSGKTESSSYFRRKEKMFRFFIRRMVKAQSFYWVVLCVVALNTLCVAMVHYNQPRRLTTTLYFAEFVFLGLFLTEMSLKMYGLGPRSYFRSSFNCFDFGVIVGSVFEVVWAAIKPGSSFGISVLRALRLLRIFKVTKYWSSLRNLVVSLLNSMKSIISLLFLLFLFIVVFALLGMQLFGGQFNFQDETPTTNFDTFPAAILTVFQILTGEDWNAVMYHGIESQGGVSKGMFSSFYFIVLTLFGNYTLLNVFLAIAVDNLANAQELTKDEEEMEEAANQKLALQKAKEVAEVSPMSAANISIAARQQNSAKARSVWEQRASQLRLQNLRASCEALYSEMDPEERLRFATTRHLRPDMKTHLDRPLVVELGRDGARGPVGGKARPEAAEAPEGVDPPRRHHRHRDKDKTPAAGDQDRAEAPKAESGEPGAREERPRPHRSHSKEAAGPPEARSERGRGPGPEGGRRHHRRGSPEEAAEREPRRHRAHRHQDPSKECAGAKGERRARHRGGPRAGPREAESGEEPARRHRARHKAQPAHEAVEKETTEKEATEKEAEIVEADKEKELRNHQPREPHCDLETSGTVTVGPMHTLPSTCLQKVEEQPEDADNQRNVTRMGSQPPDPNTIVHIPVMLTGPLGEATVVPSGNVDLESQAEGKKEVEADDVMRSGPRPIVPYSSMFCLSPTNLLRRFCHYIVTMRYFEVVILVVIALSSIALAAEDPVRTDSPRNNALKYLDYIFTGVFTFEMVIKMIDLGLLLHPGAYFRDLWNILDFIVVSGALVAFAFSGSKGKDINTIKSLRVLRVLRPLKTIKRLPKLKAVFDCVVNSLKNVLNILIVYMLFMFIFAVIAVQLFKGKFFYCTDESKELERDCRGQYLDYEKEEVEAQPRQWKKYDFHYDNVLWALLTLFTVSTGEGWPMVLKHSVDATYEEQGPSPGYRMELSIFYVVYFVVFPFFFVNIFVALIIITFQEQGDKVMSECSLEKNERACIDFAISAKPLTRYMPQNRQSFQYKTWTFVVSPPFEYFIMAMIALNTVVLMMKFYDAPYEYELMLKCLNIVFTSMFSMECVLKIIAFGVLNYFRDAWNVFDFVTVLGSITDILVTEIAETNNFINLSFLRLFRAARLIKLLRQGYTIRILLWTFVQSFKALPYVCLLIAMLFFIYAIIGMQVFGNIALDDDTSINRHNNFRTFLQALMLLFRSATGEAWHEIMLSCLSNQACDEQANATECGSDFAYFYFVSFIFLCSFLMLNLFVAVIMDNFEYLTRDSSILGPHHLDEFIRVWAEYDPAACGRISYNDMFEMLKHMSPPLGLGKKCPARVAYKRLVRMNMPISNEDMTVHFTSTLMALIRTALEIKLAPAGTKQHQCDAELRKEISVVWANLPQKTLDLLVPPHKPDEMTVGKVYAALMIFDFYKQNKTTRDQMQQAPGGLSQMGPVSLFHPLKATLEQTQPAVLRGARVFLRQKSSTSLSNGGAIQNQESGIKESVSWGTQRTQDAPHEARPPLERGHSTEIPVGRSGALAVDVQMQSITRRGPDGEPQPGLESQGRAASMPRLAAETQPVTDASPMKRSISTLAQRPRGTHLCSTTPDRPPPSQASSHHHHHRCHRRRDRKQRSLEKGPSLSADMDGAPSSAVGPGLPPGEGPTGCRRERERRQERGRSQERRQPSSSSSEKQRFYSCDRFGGREPPKPKPSLSSHPTSPTAGQEPGPHPQGSGSVNGSPLLSTSGASTPGRGGRRQLPQTPLTPRPSITYKTANSSPIHFAGAQTSLPAFSPGRLSRGLSEHNALLQRDPLSQPLAPGSRIGSDPYLGQRLDSEASVHALPEDTLTFEEAVATNSGRSSRTSYVSSLTSQSHPLRRVPNGYHCTLGLSSGGRARHSYHHPDQDHWC</sequence>
<feature type="chain" id="PRO_0000053921" description="Voltage-dependent N-type calcium channel subunit alpha-1B">
    <location>
        <begin position="1"/>
        <end position="2339"/>
    </location>
</feature>
<feature type="topological domain" description="Cytoplasmic" evidence="11 15 16">
    <location>
        <begin position="1"/>
        <end position="90"/>
    </location>
</feature>
<feature type="transmembrane region" description="Helical; Name=S1 of repeat I" evidence="11 15 16">
    <location>
        <begin position="91"/>
        <end position="114"/>
    </location>
</feature>
<feature type="topological domain" description="Extracellular" evidence="11 15 16">
    <location>
        <begin position="115"/>
        <end position="131"/>
    </location>
</feature>
<feature type="transmembrane region" description="Helical; Name=S2 of repeat I" evidence="11 15 16">
    <location>
        <begin position="132"/>
        <end position="152"/>
    </location>
</feature>
<feature type="topological domain" description="Cytoplasmic" evidence="11 15 16">
    <location>
        <begin position="153"/>
        <end position="163"/>
    </location>
</feature>
<feature type="transmembrane region" description="Helical; Name=S3 of repeat I" evidence="11 15 16">
    <location>
        <begin position="164"/>
        <end position="182"/>
    </location>
</feature>
<feature type="topological domain" description="Extracellular" evidence="11 15 16">
    <location>
        <begin position="183"/>
        <end position="187"/>
    </location>
</feature>
<feature type="transmembrane region" description="Helical; Name=S4 of repeat I" evidence="11 15 16">
    <location>
        <begin position="188"/>
        <end position="211"/>
    </location>
</feature>
<feature type="topological domain" description="Cytoplasmic" evidence="11 15 16">
    <location>
        <begin position="212"/>
        <end position="221"/>
    </location>
</feature>
<feature type="transmembrane region" description="Helical; Name=S5 of repeat I" evidence="11 15 16">
    <location>
        <begin position="222"/>
        <end position="244"/>
    </location>
</feature>
<feature type="topological domain" description="Extracellular" evidence="11 15 16">
    <location>
        <begin position="245"/>
        <end position="331"/>
    </location>
</feature>
<feature type="transmembrane region" description="Helical; Name=S6 of repeat I" evidence="11 15 16">
    <location>
        <begin position="332"/>
        <end position="356"/>
    </location>
</feature>
<feature type="topological domain" description="Cytoplasmic" evidence="11 15 16">
    <location>
        <begin position="357"/>
        <end position="482"/>
    </location>
</feature>
<feature type="transmembrane region" description="Helical; Name=S1 of repeat II" evidence="11 15 16">
    <location>
        <begin position="483"/>
        <end position="501"/>
    </location>
</feature>
<feature type="topological domain" description="Extracellular" evidence="11 15 16">
    <location>
        <begin position="502"/>
        <end position="511"/>
    </location>
</feature>
<feature type="transmembrane region" description="Helical; Name=S2 of repeat II" evidence="11 15 16">
    <location>
        <begin position="512"/>
        <end position="534"/>
    </location>
</feature>
<feature type="topological domain" description="Cytoplasmic" evidence="11 15 16">
    <location>
        <begin position="535"/>
        <end position="544"/>
    </location>
</feature>
<feature type="transmembrane region" description="Helical; Name=S3 of repeat II" evidence="11 15 16">
    <location>
        <begin position="545"/>
        <end position="566"/>
    </location>
</feature>
<feature type="topological domain" description="Extracellular" evidence="11 15 16">
    <location>
        <begin position="567"/>
        <end position="573"/>
    </location>
</feature>
<feature type="transmembrane region" description="Helical; Name=S4 of repeat II" evidence="11 15 16">
    <location>
        <begin position="574"/>
        <end position="586"/>
    </location>
</feature>
<feature type="topological domain" description="Cytoplasmic" evidence="11 15 16">
    <location>
        <begin position="587"/>
        <end position="604"/>
    </location>
</feature>
<feature type="transmembrane region" description="Helical; Name=S5 of repeat II" evidence="11 15 16">
    <location>
        <begin position="605"/>
        <end position="630"/>
    </location>
</feature>
<feature type="topological domain" description="Extracellular" evidence="11 15 16">
    <location>
        <begin position="631"/>
        <end position="682"/>
    </location>
</feature>
<feature type="transmembrane region" description="Helical; Name=S6 of repeat II" evidence="11 15 16">
    <location>
        <begin position="683"/>
        <end position="709"/>
    </location>
</feature>
<feature type="topological domain" description="Cytoplasmic" evidence="11 15 16">
    <location>
        <begin position="710"/>
        <end position="1151"/>
    </location>
</feature>
<feature type="transmembrane region" description="Helical; Name=S1 of repeat III" evidence="11 15 16">
    <location>
        <begin position="1152"/>
        <end position="1170"/>
    </location>
</feature>
<feature type="topological domain" description="Extracellular" evidence="11 15 16">
    <location>
        <begin position="1171"/>
        <end position="1178"/>
    </location>
</feature>
<feature type="transmembrane region" description="Helical; Name=S2 of repeat III" evidence="11 15 16">
    <location>
        <begin position="1179"/>
        <end position="1203"/>
    </location>
</feature>
<feature type="topological domain" description="Cytoplasmic" evidence="11 15 16">
    <location>
        <begin position="1204"/>
        <end position="1217"/>
    </location>
</feature>
<feature type="transmembrane region" description="Helical; Name=S3 of repeat III" evidence="11 15 16">
    <location>
        <begin position="1218"/>
        <end position="1238"/>
    </location>
</feature>
<feature type="topological domain" description="Extracellular" evidence="11 15 16">
    <location>
        <begin position="1239"/>
        <end position="1244"/>
    </location>
</feature>
<feature type="transmembrane region" description="Helical; Name=S4 of repeat III" evidence="11 15 16">
    <location>
        <begin position="1245"/>
        <end position="1265"/>
    </location>
</feature>
<feature type="topological domain" description="Cytoplasmic" evidence="11 15 16">
    <location>
        <begin position="1266"/>
        <end position="1283"/>
    </location>
</feature>
<feature type="transmembrane region" description="Helical; Name=S5 of repeat III" evidence="11 15 16">
    <location>
        <begin position="1284"/>
        <end position="1303"/>
    </location>
</feature>
<feature type="topological domain" description="Extracellular" evidence="11 15 16">
    <location>
        <begin position="1304"/>
        <end position="1390"/>
    </location>
</feature>
<feature type="transmembrane region" description="Helical; Name=S6 of repeat III" evidence="11 15 16">
    <location>
        <begin position="1391"/>
        <end position="1416"/>
    </location>
</feature>
<feature type="topological domain" description="Cytoplasmic" evidence="11 15 16">
    <location>
        <begin position="1417"/>
        <end position="1471"/>
    </location>
</feature>
<feature type="transmembrane region" description="Helical; Name=S1 of repeat IV" evidence="11 15 16">
    <location>
        <begin position="1472"/>
        <end position="1490"/>
    </location>
</feature>
<feature type="topological domain" description="Extracellular" evidence="11 15 16">
    <location>
        <begin position="1491"/>
        <end position="1498"/>
    </location>
</feature>
<feature type="transmembrane region" description="Helical; Name=S2 of repeat IV" evidence="11 15 16">
    <location>
        <begin position="1499"/>
        <end position="1523"/>
    </location>
</feature>
<feature type="topological domain" description="Cytoplasmic" evidence="11 15 16">
    <location>
        <begin position="1524"/>
        <end position="1533"/>
    </location>
</feature>
<feature type="transmembrane region" description="Helical; Name=S3 of repeat IV" evidence="11 15 16">
    <location>
        <begin position="1534"/>
        <end position="1555"/>
    </location>
</feature>
<feature type="topological domain" description="Extracellular" evidence="11 15 16">
    <location>
        <begin position="1556"/>
        <end position="1563"/>
    </location>
</feature>
<feature type="transmembrane region" description="Helical; Name=S4 of repeat IV" evidence="11 15 16">
    <location>
        <begin position="1564"/>
        <end position="1582"/>
    </location>
</feature>
<feature type="topological domain" description="Cytoplasmic" evidence="11 15 16">
    <location>
        <begin position="1583"/>
        <end position="1601"/>
    </location>
</feature>
<feature type="transmembrane region" description="Helical; Name=S5 of repeat IV" evidence="11 15 16">
    <location>
        <begin position="1602"/>
        <end position="1621"/>
    </location>
</feature>
<feature type="topological domain" description="Extracellular" evidence="11 15 16">
    <location>
        <begin position="1622"/>
        <end position="1683"/>
    </location>
</feature>
<feature type="transmembrane region" description="Helical; Name=S6 of repeat IV" evidence="11 15 16">
    <location>
        <begin position="1684"/>
        <end position="1707"/>
    </location>
</feature>
<feature type="topological domain" description="Cytoplasmic" evidence="11 15 16">
    <location>
        <begin position="1708"/>
        <end position="2339"/>
    </location>
</feature>
<feature type="repeat" description="I">
    <location>
        <begin position="82"/>
        <end position="359"/>
    </location>
</feature>
<feature type="repeat" description="II">
    <location>
        <begin position="468"/>
        <end position="712"/>
    </location>
</feature>
<feature type="repeat" description="III">
    <location>
        <begin position="1137"/>
        <end position="1419"/>
    </location>
</feature>
<feature type="repeat" description="IV">
    <location>
        <begin position="1456"/>
        <end position="1711"/>
    </location>
</feature>
<feature type="domain" description="EF-hand" evidence="6">
    <location>
        <begin position="1724"/>
        <end position="1759"/>
    </location>
</feature>
<feature type="region of interest" description="Disordered" evidence="7">
    <location>
        <begin position="1"/>
        <end position="37"/>
    </location>
</feature>
<feature type="region of interest" description="Binding to the beta subunit" evidence="1">
    <location>
        <begin position="379"/>
        <end position="396"/>
    </location>
</feature>
<feature type="region of interest" description="Disordered" evidence="7">
    <location>
        <begin position="816"/>
        <end position="1038"/>
    </location>
</feature>
<feature type="region of interest" description="Disordered" evidence="7">
    <location>
        <begin position="1054"/>
        <end position="1076"/>
    </location>
</feature>
<feature type="region of interest" description="Disordered" evidence="7">
    <location>
        <begin position="1916"/>
        <end position="1968"/>
    </location>
</feature>
<feature type="region of interest" description="Disordered" evidence="7">
    <location>
        <begin position="1981"/>
        <end position="2206"/>
    </location>
</feature>
<feature type="compositionally biased region" description="Gly residues" evidence="7">
    <location>
        <begin position="10"/>
        <end position="37"/>
    </location>
</feature>
<feature type="compositionally biased region" description="Basic and acidic residues" evidence="7">
    <location>
        <begin position="816"/>
        <end position="826"/>
    </location>
</feature>
<feature type="compositionally biased region" description="Basic and acidic residues" evidence="7">
    <location>
        <begin position="857"/>
        <end position="886"/>
    </location>
</feature>
<feature type="compositionally biased region" description="Basic and acidic residues" evidence="7">
    <location>
        <begin position="922"/>
        <end position="932"/>
    </location>
</feature>
<feature type="compositionally biased region" description="Basic and acidic residues" evidence="7">
    <location>
        <begin position="965"/>
        <end position="976"/>
    </location>
</feature>
<feature type="compositionally biased region" description="Basic residues" evidence="7">
    <location>
        <begin position="977"/>
        <end position="986"/>
    </location>
</feature>
<feature type="compositionally biased region" description="Basic and acidic residues" evidence="7">
    <location>
        <begin position="990"/>
        <end position="1029"/>
    </location>
</feature>
<feature type="compositionally biased region" description="Polar residues" evidence="7">
    <location>
        <begin position="1916"/>
        <end position="1931"/>
    </location>
</feature>
<feature type="compositionally biased region" description="Basic and acidic residues" evidence="7">
    <location>
        <begin position="1946"/>
        <end position="1960"/>
    </location>
</feature>
<feature type="compositionally biased region" description="Basic residues" evidence="7">
    <location>
        <begin position="2049"/>
        <end position="2063"/>
    </location>
</feature>
<feature type="compositionally biased region" description="Basic and acidic residues" evidence="7">
    <location>
        <begin position="2098"/>
        <end position="2116"/>
    </location>
</feature>
<feature type="compositionally biased region" description="Low complexity" evidence="7">
    <location>
        <begin position="2143"/>
        <end position="2153"/>
    </location>
</feature>
<feature type="compositionally biased region" description="Polar residues" evidence="7">
    <location>
        <begin position="2164"/>
        <end position="2180"/>
    </location>
</feature>
<feature type="binding site" evidence="5">
    <location>
        <begin position="451"/>
        <end position="458"/>
    </location>
    <ligand>
        <name>ATP</name>
        <dbReference type="ChEBI" id="CHEBI:30616"/>
    </ligand>
</feature>
<feature type="binding site" evidence="11 15 16">
    <location>
        <position position="544"/>
    </location>
    <ligand>
        <name>a 1,2-diacyl-sn-glycero-3-phospho-(1D-myo-inositol-4,5-bisphosphate)</name>
        <dbReference type="ChEBI" id="CHEBI:58456"/>
    </ligand>
</feature>
<feature type="binding site" evidence="11 15 16">
    <location>
        <position position="584"/>
    </location>
    <ligand>
        <name>a 1,2-diacyl-sn-glycero-3-phospho-(1D-myo-inositol-4,5-bisphosphate)</name>
        <dbReference type="ChEBI" id="CHEBI:58456"/>
    </ligand>
</feature>
<feature type="binding site" evidence="11 15 16">
    <location>
        <position position="587"/>
    </location>
    <ligand>
        <name>a 1,2-diacyl-sn-glycero-3-phospho-(1D-myo-inositol-4,5-bisphosphate)</name>
        <dbReference type="ChEBI" id="CHEBI:58456"/>
    </ligand>
</feature>
<feature type="binding site" evidence="13">
    <location>
        <position position="1737"/>
    </location>
    <ligand>
        <name>Ca(2+)</name>
        <dbReference type="ChEBI" id="CHEBI:29108"/>
    </ligand>
</feature>
<feature type="binding site" evidence="13">
    <location>
        <position position="1743"/>
    </location>
    <ligand>
        <name>Ca(2+)</name>
        <dbReference type="ChEBI" id="CHEBI:29108"/>
    </ligand>
</feature>
<feature type="binding site" evidence="13">
    <location>
        <position position="1748"/>
    </location>
    <ligand>
        <name>Ca(2+)</name>
        <dbReference type="ChEBI" id="CHEBI:29108"/>
    </ligand>
</feature>
<feature type="site" description="Calcium ion selectivity and permeability" evidence="3">
    <location>
        <position position="314"/>
    </location>
</feature>
<feature type="site" description="Calcium ion selectivity and permeability" evidence="3">
    <location>
        <position position="663"/>
    </location>
</feature>
<feature type="site" description="Calcium ion selectivity and permeability" evidence="3">
    <location>
        <position position="1365"/>
    </location>
</feature>
<feature type="site" description="Calcium ion selectivity and permeability" evidence="3">
    <location>
        <position position="1655"/>
    </location>
</feature>
<feature type="modified residue" description="Omega-N-methylarginine" evidence="2">
    <location>
        <position position="22"/>
    </location>
</feature>
<feature type="modified residue" description="Phosphoserine" evidence="2">
    <location>
        <position position="411"/>
    </location>
</feature>
<feature type="modified residue" description="Phosphoserine" evidence="2">
    <location>
        <position position="745"/>
    </location>
</feature>
<feature type="modified residue" description="Phosphoserine" evidence="2">
    <location>
        <position position="748"/>
    </location>
</feature>
<feature type="modified residue" description="Phosphoserine" evidence="2">
    <location>
        <position position="783"/>
    </location>
</feature>
<feature type="modified residue" description="Phosphoserine" evidence="2">
    <location>
        <position position="1069"/>
    </location>
</feature>
<feature type="modified residue" description="Phosphoserine" evidence="2">
    <location>
        <position position="2066"/>
    </location>
</feature>
<feature type="modified residue" description="Phosphoserine" evidence="2">
    <location>
        <position position="2224"/>
    </location>
</feature>
<feature type="modified residue" description="Phosphoserine" evidence="2">
    <location>
        <position position="2233"/>
    </location>
</feature>
<feature type="modified residue" description="Phosphoserine" evidence="2">
    <location>
        <position position="2256"/>
    </location>
</feature>
<feature type="glycosylation site" description="N-linked (GlcNAc...) asparagine" evidence="11 15 16">
    <location>
        <position position="256"/>
    </location>
</feature>
<feature type="glycosylation site" description="N-linked (GlcNAc...) asparagine" evidence="5">
    <location>
        <position position="1563"/>
    </location>
</feature>
<feature type="glycosylation site" description="N-linked (GlcNAc...) asparagine" evidence="5">
    <location>
        <position position="1675"/>
    </location>
</feature>
<feature type="splice variant" id="VSP_000882" description="In isoform Alpha-1B-2." evidence="12">
    <original>GSGSVNGSPLLSTSGASTPGRGGRRQLPQTPLTPRPSITYKTANSSPIHFAGAQTSLPAFSPGRLSRGLSEHNALLQRDPLSQPLAPGSRIGSDPYLGQRLDSEASVHALPEDTLTFEEAVATNSGRSSRTSYVSSLTSQSHPLRRVPNGYHCTLGLSSGGRARHSYHHPDQDHWC</original>
    <variation>AGSAVGFPNTTPCCRETPSASPWPLALELALTLTWGSVWTVRPLSTPCLRTLSLSRRLWPPTRAAPPGLPTCPP</variation>
    <location>
        <begin position="2164"/>
        <end position="2339"/>
    </location>
</feature>
<feature type="sequence variant" id="VAR_048741" description="In dbSNP:rs4422842.">
    <original>N</original>
    <variation>K</variation>
    <location>
        <position position="167"/>
    </location>
</feature>
<feature type="sequence variant" id="VAR_083051" description="In NEDNEH." evidence="10">
    <location>
        <begin position="383"/>
        <end position="2339"/>
    </location>
</feature>
<feature type="sequence variant" id="VAR_061100" description="In dbSNP:rs7873074.">
    <original>A</original>
    <variation>S</variation>
    <location>
        <position position="862"/>
    </location>
</feature>
<feature type="sequence variant" id="VAR_061101" description="In dbSNP:rs11137342.">
    <original>T</original>
    <variation>A</variation>
    <location>
        <position position="996"/>
    </location>
</feature>
<feature type="sequence variant" id="VAR_073432" description="Found in patients with myoclonus and dystonia; uncertain significance; single-channel currents of the mutant are smaller than wild-type, likely due to channel stabilization in the lower current amplitude open state; voltage-dependent activation and inactivation as well as ion selectivity are unchanged; dbSNP:rs184841813." evidence="9">
    <original>R</original>
    <variation>H</variation>
    <location>
        <position position="1389"/>
    </location>
</feature>
<feature type="sequence variant" id="VAR_048742" description="In dbSNP:rs1322525317.">
    <original>E</original>
    <variation>K</variation>
    <location>
        <position position="1436"/>
    </location>
</feature>
<feature type="sequence variant" id="VAR_048743" description="In dbSNP:rs12377346.">
    <original>E</original>
    <variation>K</variation>
    <location>
        <position position="1500"/>
    </location>
</feature>
<feature type="turn" evidence="19">
    <location>
        <begin position="84"/>
        <end position="92"/>
    </location>
</feature>
<feature type="helix" evidence="19">
    <location>
        <begin position="95"/>
        <end position="114"/>
    </location>
</feature>
<feature type="helix" evidence="17">
    <location>
        <begin position="119"/>
        <end position="121"/>
    </location>
</feature>
<feature type="helix" evidence="19">
    <location>
        <begin position="125"/>
        <end position="132"/>
    </location>
</feature>
<feature type="helix" evidence="19">
    <location>
        <begin position="134"/>
        <end position="150"/>
    </location>
</feature>
<feature type="strand" evidence="20">
    <location>
        <begin position="152"/>
        <end position="155"/>
    </location>
</feature>
<feature type="strand" evidence="19">
    <location>
        <begin position="158"/>
        <end position="161"/>
    </location>
</feature>
<feature type="helix" evidence="19">
    <location>
        <begin position="165"/>
        <end position="179"/>
    </location>
</feature>
<feature type="helix" evidence="19">
    <location>
        <begin position="187"/>
        <end position="191"/>
    </location>
</feature>
<feature type="helix" evidence="19">
    <location>
        <begin position="194"/>
        <end position="197"/>
    </location>
</feature>
<feature type="helix" evidence="18">
    <location>
        <begin position="198"/>
        <end position="200"/>
    </location>
</feature>
<feature type="helix" evidence="19">
    <location>
        <begin position="201"/>
        <end position="205"/>
    </location>
</feature>
<feature type="helix" evidence="19">
    <location>
        <begin position="207"/>
        <end position="217"/>
    </location>
</feature>
<feature type="helix" evidence="19">
    <location>
        <begin position="223"/>
        <end position="245"/>
    </location>
</feature>
<feature type="turn" evidence="19">
    <location>
        <begin position="246"/>
        <end position="249"/>
    </location>
</feature>
<feature type="strand" evidence="19">
    <location>
        <begin position="252"/>
        <end position="254"/>
    </location>
</feature>
<feature type="strand" evidence="20">
    <location>
        <begin position="256"/>
        <end position="258"/>
    </location>
</feature>
<feature type="strand" evidence="19">
    <location>
        <begin position="263"/>
        <end position="267"/>
    </location>
</feature>
<feature type="strand" evidence="19">
    <location>
        <begin position="270"/>
        <end position="274"/>
    </location>
</feature>
<feature type="strand" evidence="19">
    <location>
        <begin position="282"/>
        <end position="285"/>
    </location>
</feature>
<feature type="helix" evidence="19">
    <location>
        <begin position="291"/>
        <end position="293"/>
    </location>
</feature>
<feature type="helix" evidence="19">
    <location>
        <begin position="300"/>
        <end position="311"/>
    </location>
</feature>
<feature type="helix" evidence="19">
    <location>
        <begin position="316"/>
        <end position="326"/>
    </location>
</feature>
<feature type="turn" evidence="19">
    <location>
        <begin position="330"/>
        <end position="332"/>
    </location>
</feature>
<feature type="helix" evidence="19">
    <location>
        <begin position="333"/>
        <end position="343"/>
    </location>
</feature>
<feature type="helix" evidence="19">
    <location>
        <begin position="345"/>
        <end position="363"/>
    </location>
</feature>
<feature type="helix" evidence="19">
    <location>
        <begin position="366"/>
        <end position="405"/>
    </location>
</feature>
<feature type="helix" evidence="19">
    <location>
        <begin position="463"/>
        <end position="479"/>
    </location>
</feature>
<feature type="helix" evidence="19">
    <location>
        <begin position="482"/>
        <end position="500"/>
    </location>
</feature>
<feature type="helix" evidence="19">
    <location>
        <begin position="508"/>
        <end position="536"/>
    </location>
</feature>
<feature type="helix" evidence="19">
    <location>
        <begin position="538"/>
        <end position="541"/>
    </location>
</feature>
<feature type="helix" evidence="19">
    <location>
        <begin position="545"/>
        <end position="566"/>
    </location>
</feature>
<feature type="strand" evidence="19">
    <location>
        <begin position="567"/>
        <end position="569"/>
    </location>
</feature>
<feature type="helix" evidence="19">
    <location>
        <begin position="575"/>
        <end position="588"/>
    </location>
</feature>
<feature type="helix" evidence="19">
    <location>
        <begin position="592"/>
        <end position="604"/>
    </location>
</feature>
<feature type="helix" evidence="19">
    <location>
        <begin position="606"/>
        <end position="631"/>
    </location>
</feature>
<feature type="turn" evidence="19">
    <location>
        <begin position="632"/>
        <end position="635"/>
    </location>
</feature>
<feature type="strand" evidence="17">
    <location>
        <begin position="637"/>
        <end position="640"/>
    </location>
</feature>
<feature type="strand" evidence="19">
    <location>
        <begin position="646"/>
        <end position="648"/>
    </location>
</feature>
<feature type="helix" evidence="19">
    <location>
        <begin position="649"/>
        <end position="661"/>
    </location>
</feature>
<feature type="turn" evidence="19">
    <location>
        <begin position="662"/>
        <end position="664"/>
    </location>
</feature>
<feature type="helix" evidence="19">
    <location>
        <begin position="665"/>
        <end position="674"/>
    </location>
</feature>
<feature type="turn" evidence="19">
    <location>
        <begin position="679"/>
        <end position="681"/>
    </location>
</feature>
<feature type="helix" evidence="19">
    <location>
        <begin position="683"/>
        <end position="685"/>
    </location>
</feature>
<feature type="helix" evidence="19">
    <location>
        <begin position="686"/>
        <end position="694"/>
    </location>
</feature>
<feature type="helix" evidence="19">
    <location>
        <begin position="697"/>
        <end position="741"/>
    </location>
</feature>
<feature type="helix" evidence="17">
    <location>
        <begin position="748"/>
        <end position="755"/>
    </location>
</feature>
<feature type="strand" evidence="17">
    <location>
        <begin position="756"/>
        <end position="761"/>
    </location>
</feature>
<feature type="helix" evidence="19">
    <location>
        <begin position="767"/>
        <end position="781"/>
    </location>
</feature>
<feature type="helix" evidence="19">
    <location>
        <begin position="1141"/>
        <end position="1147"/>
    </location>
</feature>
<feature type="helix" evidence="19">
    <location>
        <begin position="1152"/>
        <end position="1168"/>
    </location>
</feature>
<feature type="helix" evidence="19">
    <location>
        <begin position="1178"/>
        <end position="1205"/>
    </location>
</feature>
<feature type="strand" evidence="20">
    <location>
        <begin position="1207"/>
        <end position="1213"/>
    </location>
</feature>
<feature type="helix" evidence="19">
    <location>
        <begin position="1218"/>
        <end position="1235"/>
    </location>
</feature>
<feature type="strand" evidence="17">
    <location>
        <begin position="1238"/>
        <end position="1240"/>
    </location>
</feature>
<feature type="helix" evidence="19">
    <location>
        <begin position="1245"/>
        <end position="1252"/>
    </location>
</feature>
<feature type="helix" evidence="19">
    <location>
        <begin position="1253"/>
        <end position="1260"/>
    </location>
</feature>
<feature type="helix" evidence="19">
    <location>
        <begin position="1261"/>
        <end position="1264"/>
    </location>
</feature>
<feature type="helix" evidence="19">
    <location>
        <begin position="1266"/>
        <end position="1281"/>
    </location>
</feature>
<feature type="helix" evidence="19">
    <location>
        <begin position="1283"/>
        <end position="1304"/>
    </location>
</feature>
<feature type="strand" evidence="19">
    <location>
        <begin position="1309"/>
        <end position="1313"/>
    </location>
</feature>
<feature type="turn" evidence="19">
    <location>
        <begin position="1319"/>
        <end position="1321"/>
    </location>
</feature>
<feature type="strand" evidence="19">
    <location>
        <begin position="1324"/>
        <end position="1328"/>
    </location>
</feature>
<feature type="strand" evidence="19">
    <location>
        <begin position="1330"/>
        <end position="1333"/>
    </location>
</feature>
<feature type="strand" evidence="19">
    <location>
        <begin position="1335"/>
        <end position="1338"/>
    </location>
</feature>
<feature type="strand" evidence="19">
    <location>
        <begin position="1341"/>
        <end position="1343"/>
    </location>
</feature>
<feature type="helix" evidence="19">
    <location>
        <begin position="1351"/>
        <end position="1363"/>
    </location>
</feature>
<feature type="turn" evidence="19">
    <location>
        <begin position="1364"/>
        <end position="1366"/>
    </location>
</feature>
<feature type="helix" evidence="19">
    <location>
        <begin position="1367"/>
        <end position="1375"/>
    </location>
</feature>
<feature type="turn" evidence="19">
    <location>
        <begin position="1386"/>
        <end position="1389"/>
    </location>
</feature>
<feature type="helix" evidence="19">
    <location>
        <begin position="1390"/>
        <end position="1392"/>
    </location>
</feature>
<feature type="helix" evidence="19">
    <location>
        <begin position="1393"/>
        <end position="1402"/>
    </location>
</feature>
<feature type="turn" evidence="19">
    <location>
        <begin position="1403"/>
        <end position="1405"/>
    </location>
</feature>
<feature type="helix" evidence="19">
    <location>
        <begin position="1406"/>
        <end position="1417"/>
    </location>
</feature>
<feature type="helix" evidence="19">
    <location>
        <begin position="1435"/>
        <end position="1443"/>
    </location>
</feature>
<feature type="strand" evidence="20">
    <location>
        <begin position="1457"/>
        <end position="1459"/>
    </location>
</feature>
<feature type="helix" evidence="19">
    <location>
        <begin position="1460"/>
        <end position="1469"/>
    </location>
</feature>
<feature type="helix" evidence="19">
    <location>
        <begin position="1471"/>
        <end position="1489"/>
    </location>
</feature>
<feature type="helix" evidence="19">
    <location>
        <begin position="1499"/>
        <end position="1524"/>
    </location>
</feature>
<feature type="helix" evidence="19">
    <location>
        <begin position="1527"/>
        <end position="1531"/>
    </location>
</feature>
<feature type="strand" evidence="19">
    <location>
        <begin position="1533"/>
        <end position="1535"/>
    </location>
</feature>
<feature type="helix" evidence="19">
    <location>
        <begin position="1536"/>
        <end position="1555"/>
    </location>
</feature>
<feature type="helix" evidence="19">
    <location>
        <begin position="1556"/>
        <end position="1558"/>
    </location>
</feature>
<feature type="strand" evidence="18">
    <location>
        <begin position="1559"/>
        <end position="1561"/>
    </location>
</feature>
<feature type="helix" evidence="19">
    <location>
        <begin position="1562"/>
        <end position="1564"/>
    </location>
</feature>
<feature type="helix" evidence="19">
    <location>
        <begin position="1566"/>
        <end position="1568"/>
    </location>
</feature>
<feature type="helix" evidence="19">
    <location>
        <begin position="1569"/>
        <end position="1573"/>
    </location>
</feature>
<feature type="helix" evidence="19">
    <location>
        <begin position="1574"/>
        <end position="1576"/>
    </location>
</feature>
<feature type="helix" evidence="19">
    <location>
        <begin position="1577"/>
        <end position="1581"/>
    </location>
</feature>
<feature type="helix" evidence="19">
    <location>
        <begin position="1583"/>
        <end position="1597"/>
    </location>
</feature>
<feature type="helix" evidence="19">
    <location>
        <begin position="1602"/>
        <end position="1621"/>
    </location>
</feature>
<feature type="strand" evidence="19">
    <location>
        <begin position="1630"/>
        <end position="1636"/>
    </location>
</feature>
<feature type="strand" evidence="19">
    <location>
        <begin position="1638"/>
        <end position="1640"/>
    </location>
</feature>
<feature type="helix" evidence="19">
    <location>
        <begin position="1641"/>
        <end position="1652"/>
    </location>
</feature>
<feature type="helix" evidence="19">
    <location>
        <begin position="1657"/>
        <end position="1663"/>
    </location>
</feature>
<feature type="strand" evidence="19">
    <location>
        <begin position="1665"/>
        <end position="1670"/>
    </location>
</feature>
<feature type="strand" evidence="17">
    <location>
        <begin position="1672"/>
        <end position="1675"/>
    </location>
</feature>
<feature type="strand" evidence="19">
    <location>
        <begin position="1677"/>
        <end position="1679"/>
    </location>
</feature>
<feature type="helix" evidence="19">
    <location>
        <begin position="1683"/>
        <end position="1709"/>
    </location>
</feature>
<feature type="helix" evidence="19">
    <location>
        <begin position="1711"/>
        <end position="1714"/>
    </location>
</feature>
<feature type="strand" evidence="19">
    <location>
        <begin position="1718"/>
        <end position="1720"/>
    </location>
</feature>
<feature type="helix" evidence="19">
    <location>
        <begin position="1723"/>
        <end position="1731"/>
    </location>
</feature>
<feature type="turn" evidence="17">
    <location>
        <begin position="1734"/>
        <end position="1736"/>
    </location>
</feature>
<feature type="helix" evidence="19">
    <location>
        <begin position="1748"/>
        <end position="1754"/>
    </location>
</feature>
<feature type="turn" evidence="17">
    <location>
        <begin position="1758"/>
        <end position="1761"/>
    </location>
</feature>
<feature type="strand" evidence="18">
    <location>
        <begin position="1763"/>
        <end position="1765"/>
    </location>
</feature>
<feature type="helix" evidence="17">
    <location>
        <begin position="1767"/>
        <end position="1775"/>
    </location>
</feature>
<feature type="strand" evidence="17">
    <location>
        <begin position="1776"/>
        <end position="1778"/>
    </location>
</feature>
<feature type="helix" evidence="17">
    <location>
        <begin position="1781"/>
        <end position="1783"/>
    </location>
</feature>
<feature type="helix" evidence="19">
    <location>
        <begin position="1793"/>
        <end position="1802"/>
    </location>
</feature>
<feature type="helix" evidence="17">
    <location>
        <begin position="1807"/>
        <end position="1810"/>
    </location>
</feature>
<feature type="helix" evidence="19">
    <location>
        <begin position="1813"/>
        <end position="1827"/>
    </location>
</feature>
<feature type="strand" evidence="19">
    <location>
        <begin position="1834"/>
        <end position="1836"/>
    </location>
</feature>
<feature type="helix" evidence="19">
    <location>
        <begin position="1837"/>
        <end position="1844"/>
    </location>
</feature>
<feature type="sequence conflict" description="In Ref. 1; AAA51898." evidence="13" ref="1">
    <original>L</original>
    <variation>R</variation>
    <location sequence="Q00975-2">
        <position position="2215"/>
    </location>
</feature>
<keyword id="KW-0002">3D-structure</keyword>
<keyword id="KW-0025">Alternative splicing</keyword>
<keyword id="KW-0067">ATP-binding</keyword>
<keyword id="KW-0106">Calcium</keyword>
<keyword id="KW-0107">Calcium channel</keyword>
<keyword id="KW-0109">Calcium transport</keyword>
<keyword id="KW-0225">Disease variant</keyword>
<keyword id="KW-1015">Disulfide bond</keyword>
<keyword id="KW-0887">Epilepsy</keyword>
<keyword id="KW-0325">Glycoprotein</keyword>
<keyword id="KW-0991">Intellectual disability</keyword>
<keyword id="KW-0407">Ion channel</keyword>
<keyword id="KW-0406">Ion transport</keyword>
<keyword id="KW-0472">Membrane</keyword>
<keyword id="KW-0479">Metal-binding</keyword>
<keyword id="KW-0488">Methylation</keyword>
<keyword id="KW-0547">Nucleotide-binding</keyword>
<keyword id="KW-0597">Phosphoprotein</keyword>
<keyword id="KW-1267">Proteomics identification</keyword>
<keyword id="KW-1185">Reference proteome</keyword>
<keyword id="KW-0677">Repeat</keyword>
<keyword id="KW-0812">Transmembrane</keyword>
<keyword id="KW-1133">Transmembrane helix</keyword>
<keyword id="KW-0813">Transport</keyword>
<keyword id="KW-0851">Voltage-gated channel</keyword>
<accession>Q00975</accession>
<accession>B1AQK5</accession>
<dbReference type="EMBL" id="M94172">
    <property type="protein sequence ID" value="AAA51897.1"/>
    <property type="molecule type" value="mRNA"/>
</dbReference>
<dbReference type="EMBL" id="M94173">
    <property type="protein sequence ID" value="AAA51898.1"/>
    <property type="molecule type" value="mRNA"/>
</dbReference>
<dbReference type="EMBL" id="AL591424">
    <property type="status" value="NOT_ANNOTATED_CDS"/>
    <property type="molecule type" value="Genomic_DNA"/>
</dbReference>
<dbReference type="EMBL" id="AL772363">
    <property type="status" value="NOT_ANNOTATED_CDS"/>
    <property type="molecule type" value="Genomic_DNA"/>
</dbReference>
<dbReference type="EMBL" id="U76666">
    <property type="protein sequence ID" value="AAC51138.1"/>
    <property type="molecule type" value="Genomic_DNA"/>
</dbReference>
<dbReference type="CCDS" id="CCDS59522.1">
    <molecule id="Q00975-1"/>
</dbReference>
<dbReference type="CCDS" id="CCDS59523.1">
    <molecule id="Q00975-2"/>
</dbReference>
<dbReference type="PIR" id="A42566">
    <property type="entry name" value="A42566"/>
</dbReference>
<dbReference type="PIR" id="T45115">
    <property type="entry name" value="T45115"/>
</dbReference>
<dbReference type="RefSeq" id="NP_000709.1">
    <molecule id="Q00975-1"/>
    <property type="nucleotide sequence ID" value="NM_000718.4"/>
</dbReference>
<dbReference type="RefSeq" id="NP_001230741.1">
    <molecule id="Q00975-2"/>
    <property type="nucleotide sequence ID" value="NM_001243812.2"/>
</dbReference>
<dbReference type="PDB" id="2LCM">
    <property type="method" value="NMR"/>
    <property type="chains" value="A=1242-1269"/>
</dbReference>
<dbReference type="PDB" id="7MIX">
    <property type="method" value="EM"/>
    <property type="resolution" value="3.00 A"/>
    <property type="chains" value="A=1-2339"/>
</dbReference>
<dbReference type="PDB" id="7MIY">
    <property type="method" value="EM"/>
    <property type="resolution" value="3.10 A"/>
    <property type="chains" value="A=1-2339"/>
</dbReference>
<dbReference type="PDB" id="7VFS">
    <property type="method" value="EM"/>
    <property type="resolution" value="2.80 A"/>
    <property type="chains" value="A=1-2339"/>
</dbReference>
<dbReference type="PDB" id="7VFU">
    <property type="method" value="EM"/>
    <property type="resolution" value="3.00 A"/>
    <property type="chains" value="A=1-2339"/>
</dbReference>
<dbReference type="PDB" id="7VFV">
    <property type="method" value="EM"/>
    <property type="resolution" value="3.00 A"/>
    <property type="chains" value="A=1-2339"/>
</dbReference>
<dbReference type="PDB" id="7VFW">
    <property type="method" value="EM"/>
    <property type="resolution" value="3.30 A"/>
    <property type="chains" value="A=1-2339"/>
</dbReference>
<dbReference type="PDBsum" id="2LCM"/>
<dbReference type="PDBsum" id="7MIX"/>
<dbReference type="PDBsum" id="7MIY"/>
<dbReference type="PDBsum" id="7VFS"/>
<dbReference type="PDBsum" id="7VFU"/>
<dbReference type="PDBsum" id="7VFV"/>
<dbReference type="PDBsum" id="7VFW"/>
<dbReference type="EMDB" id="EMD-23867"/>
<dbReference type="EMDB" id="EMD-23868"/>
<dbReference type="EMDB" id="EMD-31958"/>
<dbReference type="EMDB" id="EMD-31959"/>
<dbReference type="EMDB" id="EMD-31960"/>
<dbReference type="EMDB" id="EMD-31961"/>
<dbReference type="SMR" id="Q00975"/>
<dbReference type="BioGRID" id="107228">
    <property type="interactions" value="14"/>
</dbReference>
<dbReference type="CORUM" id="Q00975"/>
<dbReference type="FunCoup" id="Q00975">
    <property type="interactions" value="989"/>
</dbReference>
<dbReference type="IntAct" id="Q00975">
    <property type="interactions" value="8"/>
</dbReference>
<dbReference type="MINT" id="Q00975"/>
<dbReference type="STRING" id="9606.ENSP00000360423"/>
<dbReference type="BindingDB" id="Q00975"/>
<dbReference type="ChEMBL" id="CHEMBL4478"/>
<dbReference type="DrugBank" id="DB08838">
    <property type="generic name" value="Agmatine"/>
</dbReference>
<dbReference type="DrugBank" id="DB00381">
    <property type="generic name" value="Amlodipine"/>
</dbReference>
<dbReference type="DrugBank" id="DB09231">
    <property type="generic name" value="Benidipine"/>
</dbReference>
<dbReference type="DrugBank" id="DB13746">
    <property type="generic name" value="Bioallethrin"/>
</dbReference>
<dbReference type="DrugBank" id="DB11148">
    <property type="generic name" value="Butamben"/>
</dbReference>
<dbReference type="DrugBank" id="DB09232">
    <property type="generic name" value="Cilnidipine"/>
</dbReference>
<dbReference type="DrugBank" id="DB15229">
    <property type="generic name" value="CNV-2197944"/>
</dbReference>
<dbReference type="DrugBank" id="DB05950">
    <property type="generic name" value="Contulakin-G"/>
</dbReference>
<dbReference type="DrugBank" id="DB09235">
    <property type="generic name" value="Efonidipine"/>
</dbReference>
<dbReference type="DrugBank" id="DB00228">
    <property type="generic name" value="Enflurane"/>
</dbReference>
<dbReference type="DrugBank" id="DB00063">
    <property type="generic name" value="Eptifibatide"/>
</dbReference>
<dbReference type="DrugBank" id="DB00153">
    <property type="generic name" value="Ergocalciferol"/>
</dbReference>
<dbReference type="DrugBank" id="DB00996">
    <property type="generic name" value="Gabapentin"/>
</dbReference>
<dbReference type="DrugBank" id="DB04703">
    <property type="generic name" value="Hesperidin"/>
</dbReference>
<dbReference type="DrugBank" id="DB01202">
    <property type="generic name" value="Levetiracetam"/>
</dbReference>
<dbReference type="DrugBank" id="DB14065">
    <property type="generic name" value="Lomerizine"/>
</dbReference>
<dbReference type="DrugBank" id="DB00622">
    <property type="generic name" value="Nicardipine"/>
</dbReference>
<dbReference type="DrugBank" id="DB06649">
    <property type="generic name" value="Priralfinamide"/>
</dbReference>
<dbReference type="DrugBank" id="DB12693">
    <property type="generic name" value="Ritanserin"/>
</dbReference>
<dbReference type="DrugBank" id="DB05885">
    <property type="generic name" value="Seletracetam"/>
</dbReference>
<dbReference type="DrugBank" id="DB00661">
    <property type="generic name" value="Verapamil"/>
</dbReference>
<dbReference type="DrugBank" id="DB06283">
    <property type="generic name" value="Ziconotide"/>
</dbReference>
<dbReference type="DrugCentral" id="Q00975"/>
<dbReference type="GuidetoPHARMACOLOGY" id="533"/>
<dbReference type="GlyCosmos" id="Q00975">
    <property type="glycosylation" value="3 sites, No reported glycans"/>
</dbReference>
<dbReference type="GlyGen" id="Q00975">
    <property type="glycosylation" value="5 sites"/>
</dbReference>
<dbReference type="iPTMnet" id="Q00975"/>
<dbReference type="PhosphoSitePlus" id="Q00975"/>
<dbReference type="BioMuta" id="CACNA1B"/>
<dbReference type="DMDM" id="1705854"/>
<dbReference type="jPOST" id="Q00975"/>
<dbReference type="MassIVE" id="Q00975"/>
<dbReference type="PaxDb" id="9606-ENSP00000360423"/>
<dbReference type="PeptideAtlas" id="Q00975"/>
<dbReference type="ProteomicsDB" id="57886">
    <molecule id="Q00975-1"/>
</dbReference>
<dbReference type="ProteomicsDB" id="57887">
    <molecule id="Q00975-2"/>
</dbReference>
<dbReference type="Antibodypedia" id="32538">
    <property type="antibodies" value="142 antibodies from 28 providers"/>
</dbReference>
<dbReference type="DNASU" id="774"/>
<dbReference type="Ensembl" id="ENST00000277551.6">
    <molecule id="Q00975-2"/>
    <property type="protein sequence ID" value="ENSP00000277551.2"/>
    <property type="gene ID" value="ENSG00000148408.15"/>
</dbReference>
<dbReference type="Ensembl" id="ENST00000371372.6">
    <molecule id="Q00975-1"/>
    <property type="protein sequence ID" value="ENSP00000360423.1"/>
    <property type="gene ID" value="ENSG00000148408.15"/>
</dbReference>
<dbReference type="GeneID" id="774"/>
<dbReference type="KEGG" id="hsa:774"/>
<dbReference type="MANE-Select" id="ENST00000371372.6">
    <property type="protein sequence ID" value="ENSP00000360423.1"/>
    <property type="RefSeq nucleotide sequence ID" value="NM_000718.4"/>
    <property type="RefSeq protein sequence ID" value="NP_000709.1"/>
</dbReference>
<dbReference type="UCSC" id="uc064xny.1">
    <molecule id="Q00975-1"/>
    <property type="organism name" value="human"/>
</dbReference>
<dbReference type="AGR" id="HGNC:1389"/>
<dbReference type="CTD" id="774"/>
<dbReference type="DisGeNET" id="774"/>
<dbReference type="GeneCards" id="CACNA1B"/>
<dbReference type="HGNC" id="HGNC:1389">
    <property type="gene designation" value="CACNA1B"/>
</dbReference>
<dbReference type="HPA" id="ENSG00000148408">
    <property type="expression patterns" value="Tissue enriched (brain)"/>
</dbReference>
<dbReference type="MalaCards" id="CACNA1B"/>
<dbReference type="MIM" id="601012">
    <property type="type" value="gene"/>
</dbReference>
<dbReference type="MIM" id="618497">
    <property type="type" value="phenotype"/>
</dbReference>
<dbReference type="neXtProt" id="NX_Q00975"/>
<dbReference type="OpenTargets" id="ENSG00000148408"/>
<dbReference type="Orphanet" id="442835">
    <property type="disease" value="Non-specific early-onset epileptic encephalopathy"/>
</dbReference>
<dbReference type="PharmGKB" id="PA26008"/>
<dbReference type="VEuPathDB" id="HostDB:ENSG00000148408"/>
<dbReference type="eggNOG" id="KOG2301">
    <property type="taxonomic scope" value="Eukaryota"/>
</dbReference>
<dbReference type="GeneTree" id="ENSGT00940000155275"/>
<dbReference type="InParanoid" id="Q00975"/>
<dbReference type="OrthoDB" id="9530550at2759"/>
<dbReference type="PAN-GO" id="Q00975">
    <property type="GO annotations" value="5 GO annotations based on evolutionary models"/>
</dbReference>
<dbReference type="PhylomeDB" id="Q00975"/>
<dbReference type="PathwayCommons" id="Q00975"/>
<dbReference type="Reactome" id="R-HSA-112308">
    <property type="pathway name" value="Presynaptic depolarization and calcium channel opening"/>
</dbReference>
<dbReference type="SignaLink" id="Q00975"/>
<dbReference type="SIGNOR" id="Q00975"/>
<dbReference type="BioGRID-ORCS" id="774">
    <property type="hits" value="18 hits in 1149 CRISPR screens"/>
</dbReference>
<dbReference type="ChiTaRS" id="CACNA1B">
    <property type="organism name" value="human"/>
</dbReference>
<dbReference type="EvolutionaryTrace" id="Q00975"/>
<dbReference type="GeneWiki" id="N-type_calcium_channel"/>
<dbReference type="GenomeRNAi" id="774"/>
<dbReference type="Pharos" id="Q00975">
    <property type="development level" value="Tclin"/>
</dbReference>
<dbReference type="PRO" id="PR:Q00975"/>
<dbReference type="Proteomes" id="UP000005640">
    <property type="component" value="Chromosome 9"/>
</dbReference>
<dbReference type="RNAct" id="Q00975">
    <property type="molecule type" value="protein"/>
</dbReference>
<dbReference type="Bgee" id="ENSG00000148408">
    <property type="expression patterns" value="Expressed in middle temporal gyrus and 108 other cell types or tissues"/>
</dbReference>
<dbReference type="ExpressionAtlas" id="Q00975">
    <property type="expression patterns" value="baseline and differential"/>
</dbReference>
<dbReference type="GO" id="GO:0043025">
    <property type="term" value="C:neuronal cell body"/>
    <property type="evidence" value="ECO:0000318"/>
    <property type="project" value="GO_Central"/>
</dbReference>
<dbReference type="GO" id="GO:0005886">
    <property type="term" value="C:plasma membrane"/>
    <property type="evidence" value="ECO:0000304"/>
    <property type="project" value="Reactome"/>
</dbReference>
<dbReference type="GO" id="GO:0045202">
    <property type="term" value="C:synapse"/>
    <property type="evidence" value="ECO:0007669"/>
    <property type="project" value="GOC"/>
</dbReference>
<dbReference type="GO" id="GO:0005891">
    <property type="term" value="C:voltage-gated calcium channel complex"/>
    <property type="evidence" value="ECO:0000318"/>
    <property type="project" value="GO_Central"/>
</dbReference>
<dbReference type="GO" id="GO:0001540">
    <property type="term" value="F:amyloid-beta binding"/>
    <property type="evidence" value="ECO:0000305"/>
    <property type="project" value="ARUK-UCL"/>
</dbReference>
<dbReference type="GO" id="GO:0005524">
    <property type="term" value="F:ATP binding"/>
    <property type="evidence" value="ECO:0007669"/>
    <property type="project" value="UniProtKB-KW"/>
</dbReference>
<dbReference type="GO" id="GO:0005509">
    <property type="term" value="F:calcium ion binding"/>
    <property type="evidence" value="ECO:0007669"/>
    <property type="project" value="InterPro"/>
</dbReference>
<dbReference type="GO" id="GO:0008331">
    <property type="term" value="F:high voltage-gated calcium channel activity"/>
    <property type="evidence" value="ECO:0000315"/>
    <property type="project" value="ARUK-UCL"/>
</dbReference>
<dbReference type="GO" id="GO:0005245">
    <property type="term" value="F:voltage-gated calcium channel activity"/>
    <property type="evidence" value="ECO:0000314"/>
    <property type="project" value="UniProtKB"/>
</dbReference>
<dbReference type="GO" id="GO:0098703">
    <property type="term" value="P:calcium ion import across plasma membrane"/>
    <property type="evidence" value="ECO:0000318"/>
    <property type="project" value="GO_Central"/>
</dbReference>
<dbReference type="GO" id="GO:0007268">
    <property type="term" value="P:chemical synaptic transmission"/>
    <property type="evidence" value="ECO:0000304"/>
    <property type="project" value="ProtInc"/>
</dbReference>
<dbReference type="GO" id="GO:0050804">
    <property type="term" value="P:modulation of chemical synaptic transmission"/>
    <property type="evidence" value="ECO:0000314"/>
    <property type="project" value="ARUK-UCL"/>
</dbReference>
<dbReference type="GO" id="GO:1903235">
    <property type="term" value="P:positive regulation of calcium ion-dependent exocytosis of neurotransmitter"/>
    <property type="evidence" value="ECO:0000250"/>
    <property type="project" value="ARUK-UCL"/>
</dbReference>
<dbReference type="GO" id="GO:1904645">
    <property type="term" value="P:response to amyloid-beta"/>
    <property type="evidence" value="ECO:0000314"/>
    <property type="project" value="ARUK-UCL"/>
</dbReference>
<dbReference type="FunFam" id="1.20.120.350:FF:000001">
    <property type="entry name" value="Voltage-dependent L-type calcium channel subunit alpha"/>
    <property type="match status" value="1"/>
</dbReference>
<dbReference type="FunFam" id="1.10.238.10:FF:000063">
    <property type="entry name" value="Voltage-dependent N-type calcium channel subunit alpha"/>
    <property type="match status" value="1"/>
</dbReference>
<dbReference type="FunFam" id="1.20.120.350:FF:000011">
    <property type="entry name" value="Voltage-dependent N-type calcium channel subunit alpha"/>
    <property type="match status" value="1"/>
</dbReference>
<dbReference type="FunFam" id="1.20.120.350:FF:000013">
    <property type="entry name" value="Voltage-dependent N-type calcium channel subunit alpha"/>
    <property type="match status" value="1"/>
</dbReference>
<dbReference type="FunFam" id="1.20.120.350:FF:000015">
    <property type="entry name" value="Voltage-dependent N-type calcium channel subunit alpha"/>
    <property type="match status" value="1"/>
</dbReference>
<dbReference type="FunFam" id="1.10.287.70:FF:000023">
    <property type="entry name" value="Voltage-dependent R-type calcium channel subunit alpha"/>
    <property type="match status" value="1"/>
</dbReference>
<dbReference type="FunFam" id="1.10.287.70:FF:000025">
    <property type="entry name" value="Voltage-dependent R-type calcium channel subunit alpha"/>
    <property type="match status" value="1"/>
</dbReference>
<dbReference type="Gene3D" id="1.10.287.70">
    <property type="match status" value="4"/>
</dbReference>
<dbReference type="Gene3D" id="6.10.250.2180">
    <property type="match status" value="1"/>
</dbReference>
<dbReference type="Gene3D" id="6.10.250.2500">
    <property type="match status" value="1"/>
</dbReference>
<dbReference type="Gene3D" id="1.20.120.350">
    <property type="entry name" value="Voltage-gated potassium channels. Chain C"/>
    <property type="match status" value="4"/>
</dbReference>
<dbReference type="InterPro" id="IPR002048">
    <property type="entry name" value="EF_hand_dom"/>
</dbReference>
<dbReference type="InterPro" id="IPR031649">
    <property type="entry name" value="GPHH_dom"/>
</dbReference>
<dbReference type="InterPro" id="IPR005821">
    <property type="entry name" value="Ion_trans_dom"/>
</dbReference>
<dbReference type="InterPro" id="IPR014873">
    <property type="entry name" value="VDCC_a1su_IQ"/>
</dbReference>
<dbReference type="InterPro" id="IPR050599">
    <property type="entry name" value="VDCC_alpha-1_subunit"/>
</dbReference>
<dbReference type="InterPro" id="IPR005447">
    <property type="entry name" value="VDCC_N_a1su"/>
</dbReference>
<dbReference type="InterPro" id="IPR002077">
    <property type="entry name" value="VDCCAlpha1"/>
</dbReference>
<dbReference type="InterPro" id="IPR027359">
    <property type="entry name" value="Volt_channel_dom_sf"/>
</dbReference>
<dbReference type="PANTHER" id="PTHR45628">
    <property type="entry name" value="VOLTAGE-DEPENDENT CALCIUM CHANNEL TYPE A SUBUNIT ALPHA-1"/>
    <property type="match status" value="1"/>
</dbReference>
<dbReference type="PANTHER" id="PTHR45628:SF6">
    <property type="entry name" value="VOLTAGE-DEPENDENT N-TYPE CALCIUM CHANNEL SUBUNIT ALPHA-1B"/>
    <property type="match status" value="1"/>
</dbReference>
<dbReference type="Pfam" id="PF08763">
    <property type="entry name" value="Ca_chan_IQ"/>
    <property type="match status" value="1"/>
</dbReference>
<dbReference type="Pfam" id="PF16905">
    <property type="entry name" value="GPHH"/>
    <property type="match status" value="1"/>
</dbReference>
<dbReference type="Pfam" id="PF00520">
    <property type="entry name" value="Ion_trans"/>
    <property type="match status" value="4"/>
</dbReference>
<dbReference type="PRINTS" id="PR00167">
    <property type="entry name" value="CACHANNEL"/>
</dbReference>
<dbReference type="PRINTS" id="PR01631">
    <property type="entry name" value="NVDCCALPHA1"/>
</dbReference>
<dbReference type="SMART" id="SM01062">
    <property type="entry name" value="Ca_chan_IQ"/>
    <property type="match status" value="1"/>
</dbReference>
<dbReference type="SUPFAM" id="SSF81324">
    <property type="entry name" value="Voltage-gated potassium channels"/>
    <property type="match status" value="4"/>
</dbReference>
<dbReference type="PROSITE" id="PS50222">
    <property type="entry name" value="EF_HAND_2"/>
    <property type="match status" value="1"/>
</dbReference>
<gene>
    <name type="primary">CACNA1B</name>
    <name type="synonym">CACH5</name>
    <name type="synonym">CACNL1A5</name>
</gene>
<comment type="function">
    <text evidence="4 9">Voltage-sensitive calcium channels (VSCC) mediate the entry of calcium ions into excitable cells and are also involved in a variety of calcium-dependent processes, including muscle contraction, hormone or neurotransmitter release, gene expression, cell motility, cell division and cell death. This alpha-1B subunit gives rise to N-type calcium currents. N-type calcium channels belong to the 'high-voltage activated' (HVA) group. They are involved in pain signaling (PubMed:25296916). Calcium channels containing alpha-1B subunit may play a role in directed migration of immature neurons. Mediates Ca(2+) release probability at hippocampal neuronal soma and synaptic terminals (By similarity).</text>
</comment>
<comment type="function">
    <molecule>Isoform Alpha-1B-1</molecule>
    <text evidence="8">Voltage-sensitive calcium channels (VSCC) mediate the entry of calcium ions into excitable cells and are also involved in a variety of calcium-dependent processes, including muscle contraction, hormone or neurotransmitter release, gene expression, cell motility, cell division and cell death. This alpha-1B subunit gives rise to N-type calcium currents.</text>
</comment>
<comment type="catalytic activity">
    <reaction evidence="9">
        <text>Ca(2+)(in) = Ca(2+)(out)</text>
        <dbReference type="Rhea" id="RHEA:29671"/>
        <dbReference type="ChEBI" id="CHEBI:29108"/>
    </reaction>
</comment>
<comment type="catalytic activity">
    <molecule>Isoform Alpha-1B-1</molecule>
    <reaction evidence="8">
        <text>Ca(2+)(in) = Ca(2+)(out)</text>
        <dbReference type="Rhea" id="RHEA:29671"/>
        <dbReference type="ChEBI" id="CHEBI:29108"/>
    </reaction>
</comment>
<comment type="activity regulation">
    <text evidence="4 14">Is specifically blocked by omega-conotoxin GVIA (By similarity). Is specifically blocked by omega-conotoxin MVIIA (ziconotide) (PubMed:34234349). Is insensitive to dihydropyridines (DHP).</text>
</comment>
<comment type="activity regulation">
    <molecule>Isoform Alpha-1B-1</molecule>
    <text evidence="8">Is specifically blocked by omega-conotoxin MVIIA (ziconotide). Is insensitive to dihydropyridines (DHP).</text>
</comment>
<comment type="subunit">
    <text evidence="2">Multisubunit complex consisting of alpha-1, alpha-2, beta and delta subunits in a 1:1:1:1 ratio. The channel activity is directed by the pore-forming and voltage-sensitive alpha-1 subunit. In many cases, this subunit is sufficient to generate voltage-sensitive calcium channel activity. The auxiliary subunits beta and alpha-2/delta linked by a disulfide bridge regulate the channel activity. Interacts with RIMS1. Interacts with FMR1 (via C-terminus); this interaction induces a decrease in the number of presynaptic functional CACNA1B channels at the cell surface.</text>
</comment>
<comment type="interaction">
    <interactant intactId="EBI-1055161">
        <id>Q00975</id>
    </interactant>
    <interactant intactId="EBI-748576">
        <id>P28702</id>
        <label>RXRB</label>
    </interactant>
    <organismsDiffer>false</organismsDiffer>
    <experiments>3</experiments>
</comment>
<comment type="interaction">
    <interactant intactId="EBI-1055161">
        <id>Q00975</id>
    </interactant>
    <interactant intactId="EBI-7491743">
        <id>P20650</id>
        <label>Ppm1a</label>
    </interactant>
    <organismsDiffer>true</organismsDiffer>
    <experiments>3</experiments>
</comment>
<comment type="subcellular location">
    <subcellularLocation>
        <location evidence="11">Membrane</location>
        <topology evidence="5">Multi-pass membrane protein</topology>
    </subcellularLocation>
</comment>
<comment type="alternative products">
    <event type="alternative splicing"/>
    <isoform>
        <id>Q00975-1</id>
        <name>Alpha-1B-1</name>
        <sequence type="displayed"/>
    </isoform>
    <isoform>
        <id>Q00975-2</id>
        <name>Alpha-1B-2</name>
        <sequence type="described" ref="VSP_000882"/>
    </isoform>
</comment>
<comment type="tissue specificity">
    <text evidence="10">Isoform Alpha-1b-1 and isoform Alpha-1b-2 are expressed in the central nervous system, but not in skeletal muscle or aorta. Expressed in the cerebral white matter, cortex, hippocampus, basal ganglia, and cerebellum (PubMed:30982612).</text>
</comment>
<comment type="domain">
    <text>Each of the four internal repeats contains five hydrophobic transmembrane segments (S1, S2, S3, S5, S6) and one positively charged transmembrane segment (S4). S4 segments probably represent the voltage-sensor and are characterized by a series of positively charged amino acids at every third position.</text>
</comment>
<comment type="PTM">
    <text evidence="4">Phosphorylated in vitro by CaM-kinase II, PKA, PKC and CGPK.</text>
</comment>
<comment type="disease" evidence="10">
    <disease id="DI-05607">
        <name>Neurodevelopmental disorder with seizures and non-epileptic hyperkinetic movements</name>
        <acronym>NEDNEH</acronym>
        <description>An autosomal recessive, complex and progressive neurologic disorder characterized by severe neurodevelopmental delay and developmental regression, epileptic encephalopathy, postnatal microcephaly, hypotonia, and non-epileptic hyperkinetic movement disorder, including myoclonus dystonia, choreoathetosis, or generalized dyskinesia. Disease onset in infancy or first years of life.</description>
        <dbReference type="MIM" id="618497"/>
    </disease>
    <text>The disease may be caused by variants affecting the gene represented in this entry.</text>
</comment>
<comment type="similarity">
    <text evidence="13">Belongs to the calcium channel alpha-1 subunit (TC 1.A.1.11) family. CACNA1B subfamily.</text>
</comment>
<organism>
    <name type="scientific">Homo sapiens</name>
    <name type="common">Human</name>
    <dbReference type="NCBI Taxonomy" id="9606"/>
    <lineage>
        <taxon>Eukaryota</taxon>
        <taxon>Metazoa</taxon>
        <taxon>Chordata</taxon>
        <taxon>Craniata</taxon>
        <taxon>Vertebrata</taxon>
        <taxon>Euteleostomi</taxon>
        <taxon>Mammalia</taxon>
        <taxon>Eutheria</taxon>
        <taxon>Euarchontoglires</taxon>
        <taxon>Primates</taxon>
        <taxon>Haplorrhini</taxon>
        <taxon>Catarrhini</taxon>
        <taxon>Hominidae</taxon>
        <taxon>Homo</taxon>
    </lineage>
</organism>
<proteinExistence type="evidence at protein level"/>
<evidence type="ECO:0000250" key="1"/>
<evidence type="ECO:0000250" key="2">
    <source>
        <dbReference type="UniProtKB" id="O55017"/>
    </source>
</evidence>
<evidence type="ECO:0000250" key="3">
    <source>
        <dbReference type="UniProtKB" id="P15381"/>
    </source>
</evidence>
<evidence type="ECO:0000250" key="4">
    <source>
        <dbReference type="UniProtKB" id="Q02294"/>
    </source>
</evidence>
<evidence type="ECO:0000255" key="5"/>
<evidence type="ECO:0000255" key="6">
    <source>
        <dbReference type="PROSITE-ProRule" id="PRU00448"/>
    </source>
</evidence>
<evidence type="ECO:0000256" key="7">
    <source>
        <dbReference type="SAM" id="MobiDB-lite"/>
    </source>
</evidence>
<evidence type="ECO:0000269" key="8">
    <source>
    </source>
</evidence>
<evidence type="ECO:0000269" key="9">
    <source>
    </source>
</evidence>
<evidence type="ECO:0000269" key="10">
    <source>
    </source>
</evidence>
<evidence type="ECO:0000269" key="11">
    <source>
    </source>
</evidence>
<evidence type="ECO:0000303" key="12">
    <source>
    </source>
</evidence>
<evidence type="ECO:0000305" key="13"/>
<evidence type="ECO:0000305" key="14">
    <source>
    </source>
</evidence>
<evidence type="ECO:0007744" key="15">
    <source>
        <dbReference type="PDB" id="7MIX"/>
    </source>
</evidence>
<evidence type="ECO:0007744" key="16">
    <source>
        <dbReference type="PDB" id="7MIY"/>
    </source>
</evidence>
<evidence type="ECO:0007829" key="17">
    <source>
        <dbReference type="PDB" id="7MIX"/>
    </source>
</evidence>
<evidence type="ECO:0007829" key="18">
    <source>
        <dbReference type="PDB" id="7MIY"/>
    </source>
</evidence>
<evidence type="ECO:0007829" key="19">
    <source>
        <dbReference type="PDB" id="7VFS"/>
    </source>
</evidence>
<evidence type="ECO:0007829" key="20">
    <source>
        <dbReference type="PDB" id="7VFU"/>
    </source>
</evidence>
<reference key="1">
    <citation type="journal article" date="1992" name="Science">
        <title>Structure and functional expression of an omega-conotoxin-sensitive human N-type calcium channel.</title>
        <authorList>
            <person name="Williams M.E."/>
            <person name="Brust P.F."/>
            <person name="Feldman D.H."/>
            <person name="Patthi S."/>
            <person name="Simerson S."/>
            <person name="Maroufi A."/>
            <person name="McCue A.F."/>
            <person name="Velicelebi G."/>
            <person name="Ellis S.B."/>
            <person name="Harpold M.M."/>
        </authorList>
    </citation>
    <scope>NUCLEOTIDE SEQUENCE [MRNA] (ISOFORMS ALPHA-1B-1 AND ALPHA-1B-2)</scope>
    <scope>FUNCTION (ISOFORM ALPHA-1B-1)</scope>
    <scope>TRANSPORTER ACTIVITY (ISOFORM ALPHA-1B-1)</scope>
    <scope>ACTIVITY REGULATION (ISOFORM ALPHA-1B-1)</scope>
    <source>
        <tissue>Brain</tissue>
    </source>
</reference>
<reference key="2">
    <citation type="journal article" date="2004" name="Nature">
        <title>DNA sequence and analysis of human chromosome 9.</title>
        <authorList>
            <person name="Humphray S.J."/>
            <person name="Oliver K."/>
            <person name="Hunt A.R."/>
            <person name="Plumb R.W."/>
            <person name="Loveland J.E."/>
            <person name="Howe K.L."/>
            <person name="Andrews T.D."/>
            <person name="Searle S."/>
            <person name="Hunt S.E."/>
            <person name="Scott C.E."/>
            <person name="Jones M.C."/>
            <person name="Ainscough R."/>
            <person name="Almeida J.P."/>
            <person name="Ambrose K.D."/>
            <person name="Ashwell R.I.S."/>
            <person name="Babbage A.K."/>
            <person name="Babbage S."/>
            <person name="Bagguley C.L."/>
            <person name="Bailey J."/>
            <person name="Banerjee R."/>
            <person name="Barker D.J."/>
            <person name="Barlow K.F."/>
            <person name="Bates K."/>
            <person name="Beasley H."/>
            <person name="Beasley O."/>
            <person name="Bird C.P."/>
            <person name="Bray-Allen S."/>
            <person name="Brown A.J."/>
            <person name="Brown J.Y."/>
            <person name="Burford D."/>
            <person name="Burrill W."/>
            <person name="Burton J."/>
            <person name="Carder C."/>
            <person name="Carter N.P."/>
            <person name="Chapman J.C."/>
            <person name="Chen Y."/>
            <person name="Clarke G."/>
            <person name="Clark S.Y."/>
            <person name="Clee C.M."/>
            <person name="Clegg S."/>
            <person name="Collier R.E."/>
            <person name="Corby N."/>
            <person name="Crosier M."/>
            <person name="Cummings A.T."/>
            <person name="Davies J."/>
            <person name="Dhami P."/>
            <person name="Dunn M."/>
            <person name="Dutta I."/>
            <person name="Dyer L.W."/>
            <person name="Earthrowl M.E."/>
            <person name="Faulkner L."/>
            <person name="Fleming C.J."/>
            <person name="Frankish A."/>
            <person name="Frankland J.A."/>
            <person name="French L."/>
            <person name="Fricker D.G."/>
            <person name="Garner P."/>
            <person name="Garnett J."/>
            <person name="Ghori J."/>
            <person name="Gilbert J.G.R."/>
            <person name="Glison C."/>
            <person name="Grafham D.V."/>
            <person name="Gribble S."/>
            <person name="Griffiths C."/>
            <person name="Griffiths-Jones S."/>
            <person name="Grocock R."/>
            <person name="Guy J."/>
            <person name="Hall R.E."/>
            <person name="Hammond S."/>
            <person name="Harley J.L."/>
            <person name="Harrison E.S.I."/>
            <person name="Hart E.A."/>
            <person name="Heath P.D."/>
            <person name="Henderson C.D."/>
            <person name="Hopkins B.L."/>
            <person name="Howard P.J."/>
            <person name="Howden P.J."/>
            <person name="Huckle E."/>
            <person name="Johnson C."/>
            <person name="Johnson D."/>
            <person name="Joy A.A."/>
            <person name="Kay M."/>
            <person name="Keenan S."/>
            <person name="Kershaw J.K."/>
            <person name="Kimberley A.M."/>
            <person name="King A."/>
            <person name="Knights A."/>
            <person name="Laird G.K."/>
            <person name="Langford C."/>
            <person name="Lawlor S."/>
            <person name="Leongamornlert D.A."/>
            <person name="Leversha M."/>
            <person name="Lloyd C."/>
            <person name="Lloyd D.M."/>
            <person name="Lovell J."/>
            <person name="Martin S."/>
            <person name="Mashreghi-Mohammadi M."/>
            <person name="Matthews L."/>
            <person name="McLaren S."/>
            <person name="McLay K.E."/>
            <person name="McMurray A."/>
            <person name="Milne S."/>
            <person name="Nickerson T."/>
            <person name="Nisbett J."/>
            <person name="Nordsiek G."/>
            <person name="Pearce A.V."/>
            <person name="Peck A.I."/>
            <person name="Porter K.M."/>
            <person name="Pandian R."/>
            <person name="Pelan S."/>
            <person name="Phillimore B."/>
            <person name="Povey S."/>
            <person name="Ramsey Y."/>
            <person name="Rand V."/>
            <person name="Scharfe M."/>
            <person name="Sehra H.K."/>
            <person name="Shownkeen R."/>
            <person name="Sims S.K."/>
            <person name="Skuce C.D."/>
            <person name="Smith M."/>
            <person name="Steward C.A."/>
            <person name="Swarbreck D."/>
            <person name="Sycamore N."/>
            <person name="Tester J."/>
            <person name="Thorpe A."/>
            <person name="Tracey A."/>
            <person name="Tromans A."/>
            <person name="Thomas D.W."/>
            <person name="Wall M."/>
            <person name="Wallis J.M."/>
            <person name="West A.P."/>
            <person name="Whitehead S.L."/>
            <person name="Willey D.L."/>
            <person name="Williams S.A."/>
            <person name="Wilming L."/>
            <person name="Wray P.W."/>
            <person name="Young L."/>
            <person name="Ashurst J.L."/>
            <person name="Coulson A."/>
            <person name="Blocker H."/>
            <person name="Durbin R.M."/>
            <person name="Sulston J.E."/>
            <person name="Hubbard T."/>
            <person name="Jackson M.J."/>
            <person name="Bentley D.R."/>
            <person name="Beck S."/>
            <person name="Rogers J."/>
            <person name="Dunham I."/>
        </authorList>
    </citation>
    <scope>NUCLEOTIDE SEQUENCE [LARGE SCALE GENOMIC DNA]</scope>
</reference>
<reference key="3">
    <citation type="journal article" date="1997" name="J. Biol. Chem.">
        <title>Isolation and characterization of the 5'-upstream region of the human N-type calcium channel alpha1B subunit gene. Chromosomal localization and promoter analysis.</title>
        <authorList>
            <person name="Kim D.S."/>
            <person name="Jung H.-H."/>
            <person name="Park S.-H."/>
            <person name="Chin H."/>
        </authorList>
    </citation>
    <scope>NUCLEOTIDE SEQUENCE [GENOMIC DNA] OF 1-94</scope>
    <source>
        <tissue>Lung fibroblast</tissue>
    </source>
</reference>
<reference key="4">
    <citation type="journal article" date="2015" name="Hum. Mol. Genet.">
        <title>CACNA1B mutation is linked to unique myoclonus-dystonia syndrome.</title>
        <authorList>
            <person name="Groen J.L."/>
            <person name="Andrade A."/>
            <person name="Ritz K."/>
            <person name="Jalalzadeh H."/>
            <person name="Haagmans M."/>
            <person name="Bradley T.E."/>
            <person name="Jongejan A."/>
            <person name="Verbeek D.S."/>
            <person name="Nuernberg P."/>
            <person name="Denome S."/>
            <person name="Hennekam R.C."/>
            <person name="Lipscombe D."/>
            <person name="Baas F."/>
            <person name="Tijssen M.A."/>
        </authorList>
    </citation>
    <scope>VARIANT HIS-1389</scope>
    <scope>CHARACTERIZATION OF VARIANT HIS-1389</scope>
    <scope>FUNCTION</scope>
    <scope>TRANSPORTER ACTIVITY</scope>
</reference>
<reference key="5">
    <citation type="journal article" date="2015" name="Hum. Mol. Genet.">
        <title>The CACNA1B R1389H variant is not associated with myoclonus-dystonia in a large European multicentric cohort.</title>
        <authorList>
            <person name="Mencacci N.E."/>
            <person name="R'bibo L."/>
            <person name="Bandres-Ciga S."/>
            <person name="Carecchio M."/>
            <person name="Zorzi G."/>
            <person name="Nardocci N."/>
            <person name="Garavaglia B."/>
            <person name="Batla A."/>
            <person name="Bhatia K.P."/>
            <person name="Pittman A.M."/>
            <person name="Hardy J."/>
            <person name="Weissbach A."/>
            <person name="Klein C."/>
            <person name="Gasser T."/>
            <person name="Lohmann E."/>
            <person name="Wood N.W."/>
        </authorList>
    </citation>
    <scope>VARIANT HIS-1389</scope>
</reference>
<reference key="6">
    <citation type="journal article" date="2019" name="Am. J. Hum. Genet.">
        <title>Bi-allelic loss-of-function CACNA1B mutations in progressive epilepsy-dyskinesia.</title>
        <authorList>
            <consortium name="Deciphering Developmental Disorders Study"/>
            <consortium name="UK10K Consortium"/>
            <consortium name="NIHR BioResource"/>
            <person name="Gorman K.M."/>
            <person name="Meyer E."/>
            <person name="Grozeva D."/>
            <person name="Spinelli E."/>
            <person name="McTague A."/>
            <person name="Sanchis-Juan A."/>
            <person name="Carss K.J."/>
            <person name="Bryant E."/>
            <person name="Reich A."/>
            <person name="Schneider A.L."/>
            <person name="Pressler R.M."/>
            <person name="Simpson M.A."/>
            <person name="Debelle G.D."/>
            <person name="Wassmer E."/>
            <person name="Morton J."/>
            <person name="Sieciechowicz D."/>
            <person name="Jan-Kamsteeg E."/>
            <person name="Paciorkowski A.R."/>
            <person name="King M.D."/>
            <person name="Cross J.H."/>
            <person name="Poduri A."/>
            <person name="Mefford H.C."/>
            <person name="Scheffer I.E."/>
            <person name="Haack T.B."/>
            <person name="McCullagh G."/>
            <person name="Millichap J.J."/>
            <person name="Carvill G.L."/>
            <person name="Clayton-Smith J."/>
            <person name="Maher E.R."/>
            <person name="Raymond F.L."/>
            <person name="Kurian M.A."/>
        </authorList>
    </citation>
    <scope>VARIANT NEDNEH 383-ARG--CYS-2339 DEL</scope>
    <scope>INVOLVEMENT IN NEDNEH</scope>
    <scope>TISSUE SPECIFICITY</scope>
</reference>
<reference key="7">
    <citation type="journal article" date="2021" name="Nature">
        <title>Structure of human Cav2.2 channel blocked by the painkiller ziconotide.</title>
        <authorList>
            <person name="Gao S."/>
            <person name="Yao X."/>
            <person name="Yan N."/>
        </authorList>
    </citation>
    <scope>STRUCTURE BY ELECTRON MICROSCOPY (3.0 ANGSTROMS) OF 86-1837 IN COMPLEX WITH SUBUNITS ALPHA2DELTA-1 AND BETA3 IN PRESENCE AND ABSENCE OF THE OMEGA-CONOTOXIN MVIIA</scope>
    <scope>TOPOLOGY</scope>
    <scope>DISULFIDE BONDS</scope>
    <scope>SUBCELLULAR LOCATION</scope>
    <scope>GLYCOSYLATION AT ASN-256</scope>
    <scope>PIP2-BINDING</scope>
    <scope>SUBUNIT</scope>
    <scope>ACTIVITY REGULATION</scope>
</reference>
<name>CAC1B_HUMAN</name>